<protein>
    <recommendedName>
        <fullName evidence="1">Trigger factor</fullName>
        <shortName evidence="1">TF</shortName>
        <ecNumber evidence="1">5.2.1.8</ecNumber>
    </recommendedName>
    <alternativeName>
        <fullName evidence="1">PPIase</fullName>
    </alternativeName>
</protein>
<feature type="chain" id="PRO_0000179304" description="Trigger factor">
    <location>
        <begin position="1"/>
        <end position="434"/>
    </location>
</feature>
<feature type="domain" description="PPIase FKBP-type" evidence="1">
    <location>
        <begin position="161"/>
        <end position="246"/>
    </location>
</feature>
<dbReference type="EC" id="5.2.1.8" evidence="1"/>
<dbReference type="EMBL" id="CR555306">
    <property type="protein sequence ID" value="CAI08952.1"/>
    <property type="molecule type" value="Genomic_DNA"/>
</dbReference>
<dbReference type="RefSeq" id="WP_011238633.1">
    <property type="nucleotide sequence ID" value="NC_006513.1"/>
</dbReference>
<dbReference type="SMR" id="Q5P162"/>
<dbReference type="STRING" id="76114.ebA4969"/>
<dbReference type="KEGG" id="eba:ebA4969"/>
<dbReference type="eggNOG" id="COG0544">
    <property type="taxonomic scope" value="Bacteria"/>
</dbReference>
<dbReference type="HOGENOM" id="CLU_033058_2_0_4"/>
<dbReference type="OrthoDB" id="9767721at2"/>
<dbReference type="Proteomes" id="UP000006552">
    <property type="component" value="Chromosome"/>
</dbReference>
<dbReference type="GO" id="GO:0005737">
    <property type="term" value="C:cytoplasm"/>
    <property type="evidence" value="ECO:0007669"/>
    <property type="project" value="UniProtKB-SubCell"/>
</dbReference>
<dbReference type="GO" id="GO:0003755">
    <property type="term" value="F:peptidyl-prolyl cis-trans isomerase activity"/>
    <property type="evidence" value="ECO:0007669"/>
    <property type="project" value="UniProtKB-UniRule"/>
</dbReference>
<dbReference type="GO" id="GO:0044183">
    <property type="term" value="F:protein folding chaperone"/>
    <property type="evidence" value="ECO:0007669"/>
    <property type="project" value="TreeGrafter"/>
</dbReference>
<dbReference type="GO" id="GO:0043022">
    <property type="term" value="F:ribosome binding"/>
    <property type="evidence" value="ECO:0007669"/>
    <property type="project" value="TreeGrafter"/>
</dbReference>
<dbReference type="GO" id="GO:0051083">
    <property type="term" value="P:'de novo' cotranslational protein folding"/>
    <property type="evidence" value="ECO:0007669"/>
    <property type="project" value="TreeGrafter"/>
</dbReference>
<dbReference type="GO" id="GO:0051301">
    <property type="term" value="P:cell division"/>
    <property type="evidence" value="ECO:0007669"/>
    <property type="project" value="UniProtKB-KW"/>
</dbReference>
<dbReference type="GO" id="GO:0061077">
    <property type="term" value="P:chaperone-mediated protein folding"/>
    <property type="evidence" value="ECO:0007669"/>
    <property type="project" value="TreeGrafter"/>
</dbReference>
<dbReference type="GO" id="GO:0015031">
    <property type="term" value="P:protein transport"/>
    <property type="evidence" value="ECO:0007669"/>
    <property type="project" value="UniProtKB-UniRule"/>
</dbReference>
<dbReference type="GO" id="GO:0043335">
    <property type="term" value="P:protein unfolding"/>
    <property type="evidence" value="ECO:0007669"/>
    <property type="project" value="TreeGrafter"/>
</dbReference>
<dbReference type="FunFam" id="3.10.50.40:FF:000001">
    <property type="entry name" value="Trigger factor"/>
    <property type="match status" value="1"/>
</dbReference>
<dbReference type="Gene3D" id="3.10.50.40">
    <property type="match status" value="1"/>
</dbReference>
<dbReference type="Gene3D" id="3.30.70.1050">
    <property type="entry name" value="Trigger factor ribosome-binding domain"/>
    <property type="match status" value="1"/>
</dbReference>
<dbReference type="Gene3D" id="1.10.3120.10">
    <property type="entry name" value="Trigger factor, C-terminal domain"/>
    <property type="match status" value="1"/>
</dbReference>
<dbReference type="HAMAP" id="MF_00303">
    <property type="entry name" value="Trigger_factor_Tig"/>
    <property type="match status" value="1"/>
</dbReference>
<dbReference type="InterPro" id="IPR046357">
    <property type="entry name" value="PPIase_dom_sf"/>
</dbReference>
<dbReference type="InterPro" id="IPR001179">
    <property type="entry name" value="PPIase_FKBP_dom"/>
</dbReference>
<dbReference type="InterPro" id="IPR005215">
    <property type="entry name" value="Trig_fac"/>
</dbReference>
<dbReference type="InterPro" id="IPR008880">
    <property type="entry name" value="Trigger_fac_C"/>
</dbReference>
<dbReference type="InterPro" id="IPR037041">
    <property type="entry name" value="Trigger_fac_C_sf"/>
</dbReference>
<dbReference type="InterPro" id="IPR008881">
    <property type="entry name" value="Trigger_fac_ribosome-bd_bac"/>
</dbReference>
<dbReference type="InterPro" id="IPR036611">
    <property type="entry name" value="Trigger_fac_ribosome-bd_sf"/>
</dbReference>
<dbReference type="InterPro" id="IPR027304">
    <property type="entry name" value="Trigger_fact/SurA_dom_sf"/>
</dbReference>
<dbReference type="NCBIfam" id="TIGR00115">
    <property type="entry name" value="tig"/>
    <property type="match status" value="1"/>
</dbReference>
<dbReference type="PANTHER" id="PTHR30560">
    <property type="entry name" value="TRIGGER FACTOR CHAPERONE AND PEPTIDYL-PROLYL CIS/TRANS ISOMERASE"/>
    <property type="match status" value="1"/>
</dbReference>
<dbReference type="PANTHER" id="PTHR30560:SF3">
    <property type="entry name" value="TRIGGER FACTOR-LIKE PROTEIN TIG, CHLOROPLASTIC"/>
    <property type="match status" value="1"/>
</dbReference>
<dbReference type="Pfam" id="PF00254">
    <property type="entry name" value="FKBP_C"/>
    <property type="match status" value="1"/>
</dbReference>
<dbReference type="Pfam" id="PF05698">
    <property type="entry name" value="Trigger_C"/>
    <property type="match status" value="1"/>
</dbReference>
<dbReference type="Pfam" id="PF05697">
    <property type="entry name" value="Trigger_N"/>
    <property type="match status" value="1"/>
</dbReference>
<dbReference type="PIRSF" id="PIRSF003095">
    <property type="entry name" value="Trigger_factor"/>
    <property type="match status" value="1"/>
</dbReference>
<dbReference type="SUPFAM" id="SSF54534">
    <property type="entry name" value="FKBP-like"/>
    <property type="match status" value="1"/>
</dbReference>
<dbReference type="SUPFAM" id="SSF109998">
    <property type="entry name" value="Triger factor/SurA peptide-binding domain-like"/>
    <property type="match status" value="1"/>
</dbReference>
<dbReference type="SUPFAM" id="SSF102735">
    <property type="entry name" value="Trigger factor ribosome-binding domain"/>
    <property type="match status" value="1"/>
</dbReference>
<dbReference type="PROSITE" id="PS50059">
    <property type="entry name" value="FKBP_PPIASE"/>
    <property type="match status" value="1"/>
</dbReference>
<accession>Q5P162</accession>
<keyword id="KW-0131">Cell cycle</keyword>
<keyword id="KW-0132">Cell division</keyword>
<keyword id="KW-0143">Chaperone</keyword>
<keyword id="KW-0963">Cytoplasm</keyword>
<keyword id="KW-0413">Isomerase</keyword>
<keyword id="KW-1185">Reference proteome</keyword>
<keyword id="KW-0697">Rotamase</keyword>
<organism>
    <name type="scientific">Aromatoleum aromaticum (strain DSM 19018 / LMG 30748 / EbN1)</name>
    <name type="common">Azoarcus sp. (strain EbN1)</name>
    <dbReference type="NCBI Taxonomy" id="76114"/>
    <lineage>
        <taxon>Bacteria</taxon>
        <taxon>Pseudomonadati</taxon>
        <taxon>Pseudomonadota</taxon>
        <taxon>Betaproteobacteria</taxon>
        <taxon>Rhodocyclales</taxon>
        <taxon>Rhodocyclaceae</taxon>
        <taxon>Aromatoleum</taxon>
    </lineage>
</organism>
<sequence length="434" mass="48083">MQTTQETQGALERRIDMSVPMAEIDKEVDSRLKRMARTVKMPGFRPGKVPMKIVAQTYGSQARSEAIGAAVEKAFGDKVREQNLRVAGYPRIEPREAAVEGALEFSAVFEVYPQVPLGDLSGQKVERPVLTVGDAEVDKTIEVLRKQRTTFEAVDRPAQDGDRVVIDFAGRKDGELFEGGKAQDFPFVIGAGSMLKDFESAVGGLKVGETKTFEMTFPEDYHAADLAGQKVEFEITVKGVEAPILPAVDADLARALGVADGDVTKLRDEVRANLEREVKRRIQGKVKEQVMEALLVANPIEVPKALVEAESRQLAENAKRDLEMRGMNTKDIPVEPTWFADQAVRRVKLGLIMAELVNAKELYAKPEQVRAMIDEMAQSYEDPAELVRWYYAQPERLGQAEAVVIEDNVVAWVLSQTQTEDKTVTFDELMGNAA</sequence>
<proteinExistence type="inferred from homology"/>
<evidence type="ECO:0000255" key="1">
    <source>
        <dbReference type="HAMAP-Rule" id="MF_00303"/>
    </source>
</evidence>
<name>TIG_AROAE</name>
<reference key="1">
    <citation type="journal article" date="2005" name="Arch. Microbiol.">
        <title>The genome sequence of an anaerobic aromatic-degrading denitrifying bacterium, strain EbN1.</title>
        <authorList>
            <person name="Rabus R."/>
            <person name="Kube M."/>
            <person name="Heider J."/>
            <person name="Beck A."/>
            <person name="Heitmann K."/>
            <person name="Widdel F."/>
            <person name="Reinhardt R."/>
        </authorList>
    </citation>
    <scope>NUCLEOTIDE SEQUENCE [LARGE SCALE GENOMIC DNA]</scope>
    <source>
        <strain>DSM 19018 / LMG 30748 / EbN1</strain>
    </source>
</reference>
<comment type="function">
    <text evidence="1">Involved in protein export. Acts as a chaperone by maintaining the newly synthesized protein in an open conformation. Functions as a peptidyl-prolyl cis-trans isomerase.</text>
</comment>
<comment type="catalytic activity">
    <reaction evidence="1">
        <text>[protein]-peptidylproline (omega=180) = [protein]-peptidylproline (omega=0)</text>
        <dbReference type="Rhea" id="RHEA:16237"/>
        <dbReference type="Rhea" id="RHEA-COMP:10747"/>
        <dbReference type="Rhea" id="RHEA-COMP:10748"/>
        <dbReference type="ChEBI" id="CHEBI:83833"/>
        <dbReference type="ChEBI" id="CHEBI:83834"/>
        <dbReference type="EC" id="5.2.1.8"/>
    </reaction>
</comment>
<comment type="subcellular location">
    <subcellularLocation>
        <location>Cytoplasm</location>
    </subcellularLocation>
    <text evidence="1">About half TF is bound to the ribosome near the polypeptide exit tunnel while the other half is free in the cytoplasm.</text>
</comment>
<comment type="domain">
    <text evidence="1">Consists of 3 domains; the N-terminus binds the ribosome, the middle domain has PPIase activity, while the C-terminus has intrinsic chaperone activity on its own.</text>
</comment>
<comment type="similarity">
    <text evidence="1">Belongs to the FKBP-type PPIase family. Tig subfamily.</text>
</comment>
<gene>
    <name evidence="1" type="primary">tig</name>
    <name type="ordered locus">AZOSEA28270</name>
    <name type="ORF">ebA4969</name>
</gene>